<sequence length="318" mass="35852">MQLEVNNMWISFSVRYLVNVEDLNNVESAGNYVRHRRAPLVFKDKDSYTVTYVPAVSGEMIAHGYQMNLVELALQRNLPVDSLAKQGILIKRGSDDKVHEGTKCTDEKGSDYELCVINEDIVEDVAGFMNPNKLVKRTSNVAFSYMVPAIDAVKASTISSQFHVRYANKELMDKYKNENIQSLYNIETASASYVLTGYLNVNSVGKTQNYPVKEVDKKKDREKAALDALMLTLTQFLFGAKLTRFKPIVEIEALFVSASEKPFNLPPVTGDIKKYIDLVNSTTDSFAKILNIKRPVVKYYLKEEKGNVNTPIDAFTVM</sequence>
<accession>Q97YC7</accession>
<proteinExistence type="evidence at protein level"/>
<dbReference type="EMBL" id="AE006641">
    <property type="protein sequence ID" value="AAK41634.1"/>
    <property type="molecule type" value="Genomic_DNA"/>
</dbReference>
<dbReference type="PIR" id="C99297">
    <property type="entry name" value="C99297"/>
</dbReference>
<dbReference type="SMR" id="Q97YC7"/>
<dbReference type="STRING" id="273057.SSO1399"/>
<dbReference type="PaxDb" id="273057-SSO1399"/>
<dbReference type="EnsemblBacteria" id="AAK41634">
    <property type="protein sequence ID" value="AAK41634"/>
    <property type="gene ID" value="SSO1399"/>
</dbReference>
<dbReference type="KEGG" id="sso:SSO1399"/>
<dbReference type="PATRIC" id="fig|273057.12.peg.1415"/>
<dbReference type="eggNOG" id="arCOG03617">
    <property type="taxonomic scope" value="Archaea"/>
</dbReference>
<dbReference type="HOGENOM" id="CLU_054331_0_0_2"/>
<dbReference type="InParanoid" id="Q97YC7"/>
<dbReference type="PhylomeDB" id="Q97YC7"/>
<dbReference type="Proteomes" id="UP000001974">
    <property type="component" value="Chromosome"/>
</dbReference>
<dbReference type="GO" id="GO:0051607">
    <property type="term" value="P:defense response to virus"/>
    <property type="evidence" value="ECO:0007669"/>
    <property type="project" value="UniProtKB-KW"/>
</dbReference>
<dbReference type="InterPro" id="IPR002764">
    <property type="entry name" value="Cas7/Cst2/DevR_sub_I-a/Apern"/>
</dbReference>
<dbReference type="InterPro" id="IPR010154">
    <property type="entry name" value="CRISPR-assoc_Cas7/Cst2/DevR"/>
</dbReference>
<dbReference type="InterPro" id="IPR052681">
    <property type="entry name" value="CRISPR-Cas7/Cst2/DevR"/>
</dbReference>
<dbReference type="NCBIfam" id="TIGR01875">
    <property type="entry name" value="cas_MJ0381"/>
    <property type="match status" value="1"/>
</dbReference>
<dbReference type="NCBIfam" id="TIGR02583">
    <property type="entry name" value="DevR_archaea"/>
    <property type="match status" value="1"/>
</dbReference>
<dbReference type="PANTHER" id="PTHR37459">
    <property type="match status" value="1"/>
</dbReference>
<dbReference type="PANTHER" id="PTHR37459:SF1">
    <property type="entry name" value="CRISPR-ASSOCIATED PROTEIN CAS7_CST2_DEVR"/>
    <property type="match status" value="1"/>
</dbReference>
<dbReference type="Pfam" id="PF01905">
    <property type="entry name" value="DevR"/>
    <property type="match status" value="1"/>
</dbReference>
<feature type="chain" id="PRO_0000417886" description="CRISPR-associated protein Cas7/Csa2 1">
    <location>
        <begin position="1"/>
        <end position="318"/>
    </location>
</feature>
<protein>
    <recommendedName>
        <fullName>CRISPR-associated protein Cas7/Csa2 1</fullName>
    </recommendedName>
    <alternativeName>
        <fullName>CRISPR-associated aCascade subunit Cas7/Csa2, subtype I-A/Apern 1</fullName>
    </alternativeName>
</protein>
<gene>
    <name type="primary">cas7a</name>
    <name type="ordered locus">SSO1399</name>
</gene>
<comment type="function">
    <text evidence="1">CRISPR (clustered regularly interspaced short palindromic repeat) is an adaptive immune system that provides protection against mobile genetic elements (viruses, transposable elements and conjugative plasmids). CRISPR clusters contain spacers, sequences complementary to antecedent mobile elements, and target invading nucleic acids. CRISPR clusters are transcribed and processed into CRISPR RNA (crRNA) (By similarity).</text>
</comment>
<comment type="subunit">
    <text evidence="2">Part of the aCascade ribonucleoprotein complex, minimally composed of Csa2 and Cas5a, which binds crRNA. Other possible components of aCascade in strain P1 are Cas6b (SSO1437) and Csa5 (SSO1443), while SSO1399, Cas5b (SSO1400) and SSO1401 have sometimes been seen weakly associated. Csa2 is probably the major RNA-binding subunit. The Csa2-Cas5a-crRNA complex also binds target DNA homologous to crRNA, probably forming an R-loop. Purified aCascade forms a filament about 6 nm in width.</text>
</comment>
<comment type="miscellaneous">
    <text>The aCascade complex was purified from strain P1.</text>
</comment>
<comment type="similarity">
    <text evidence="3">Belongs to the CRISPR-associated protein Cas7/Cst2/DevR family. Subtype I-a/Apern subfamily.</text>
</comment>
<name>CSA2A_SACS2</name>
<reference key="1">
    <citation type="journal article" date="2001" name="Proc. Natl. Acad. Sci. U.S.A.">
        <title>The complete genome of the crenarchaeon Sulfolobus solfataricus P2.</title>
        <authorList>
            <person name="She Q."/>
            <person name="Singh R.K."/>
            <person name="Confalonieri F."/>
            <person name="Zivanovic Y."/>
            <person name="Allard G."/>
            <person name="Awayez M.J."/>
            <person name="Chan-Weiher C.C.-Y."/>
            <person name="Clausen I.G."/>
            <person name="Curtis B.A."/>
            <person name="De Moors A."/>
            <person name="Erauso G."/>
            <person name="Fletcher C."/>
            <person name="Gordon P.M.K."/>
            <person name="Heikamp-de Jong I."/>
            <person name="Jeffries A.C."/>
            <person name="Kozera C.J."/>
            <person name="Medina N."/>
            <person name="Peng X."/>
            <person name="Thi-Ngoc H.P."/>
            <person name="Redder P."/>
            <person name="Schenk M.E."/>
            <person name="Theriault C."/>
            <person name="Tolstrup N."/>
            <person name="Charlebois R.L."/>
            <person name="Doolittle W.F."/>
            <person name="Duguet M."/>
            <person name="Gaasterland T."/>
            <person name="Garrett R.A."/>
            <person name="Ragan M.A."/>
            <person name="Sensen C.W."/>
            <person name="Van der Oost J."/>
        </authorList>
    </citation>
    <scope>NUCLEOTIDE SEQUENCE [LARGE SCALE GENOMIC DNA]</scope>
    <source>
        <strain>ATCC 35092 / DSM 1617 / JCM 11322 / P2</strain>
    </source>
</reference>
<reference key="2">
    <citation type="journal article" date="2011" name="J. Biol. Chem.">
        <title>Structural and functional characterization of an archaeal clustered regularly interspaced short palindromic repeat (CRISPR)-associated complex for antiviral defense (CASCADE).</title>
        <authorList>
            <person name="Lintner N.G."/>
            <person name="Kerou M."/>
            <person name="Brumfield S.K."/>
            <person name="Graham S."/>
            <person name="Liu H."/>
            <person name="Naismith J.H."/>
            <person name="Sdano M."/>
            <person name="Peng N."/>
            <person name="She Q."/>
            <person name="Copie V."/>
            <person name="Young M.J."/>
            <person name="White M.F."/>
            <person name="Lawrence C.M."/>
        </authorList>
    </citation>
    <scope>SUBUNIT</scope>
    <source>
        <strain>ATCC 35091 / DSM 1616 / JCM 8930 / NBRC 15331 / P1</strain>
    </source>
</reference>
<organism>
    <name type="scientific">Saccharolobus solfataricus (strain ATCC 35092 / DSM 1617 / JCM 11322 / P2)</name>
    <name type="common">Sulfolobus solfataricus</name>
    <dbReference type="NCBI Taxonomy" id="273057"/>
    <lineage>
        <taxon>Archaea</taxon>
        <taxon>Thermoproteota</taxon>
        <taxon>Thermoprotei</taxon>
        <taxon>Sulfolobales</taxon>
        <taxon>Sulfolobaceae</taxon>
        <taxon>Saccharolobus</taxon>
    </lineage>
</organism>
<evidence type="ECO:0000250" key="1"/>
<evidence type="ECO:0000269" key="2">
    <source>
    </source>
</evidence>
<evidence type="ECO:0000305" key="3"/>
<keyword id="KW-0051">Antiviral defense</keyword>
<keyword id="KW-1185">Reference proteome</keyword>